<keyword id="KW-0963">Cytoplasm</keyword>
<keyword id="KW-0489">Methyltransferase</keyword>
<keyword id="KW-0949">S-adenosyl-L-methionine</keyword>
<keyword id="KW-0808">Transferase</keyword>
<dbReference type="EC" id="2.1.1.-" evidence="1"/>
<dbReference type="EMBL" id="AP007281">
    <property type="protein sequence ID" value="BAG25206.1"/>
    <property type="molecule type" value="Genomic_DNA"/>
</dbReference>
<dbReference type="RefSeq" id="WP_003668152.1">
    <property type="nucleotide sequence ID" value="NC_010609.1"/>
</dbReference>
<dbReference type="SMR" id="B2G6X4"/>
<dbReference type="KEGG" id="lrf:LAR_0690"/>
<dbReference type="HOGENOM" id="CLU_049382_0_1_9"/>
<dbReference type="GO" id="GO:0005737">
    <property type="term" value="C:cytoplasm"/>
    <property type="evidence" value="ECO:0007669"/>
    <property type="project" value="UniProtKB-SubCell"/>
</dbReference>
<dbReference type="GO" id="GO:0016279">
    <property type="term" value="F:protein-lysine N-methyltransferase activity"/>
    <property type="evidence" value="ECO:0007669"/>
    <property type="project" value="RHEA"/>
</dbReference>
<dbReference type="GO" id="GO:0032259">
    <property type="term" value="P:methylation"/>
    <property type="evidence" value="ECO:0007669"/>
    <property type="project" value="UniProtKB-KW"/>
</dbReference>
<dbReference type="CDD" id="cd02440">
    <property type="entry name" value="AdoMet_MTases"/>
    <property type="match status" value="1"/>
</dbReference>
<dbReference type="Gene3D" id="3.40.50.150">
    <property type="entry name" value="Vaccinia Virus protein VP39"/>
    <property type="match status" value="1"/>
</dbReference>
<dbReference type="HAMAP" id="MF_00735">
    <property type="entry name" value="Methyltr_PrmA"/>
    <property type="match status" value="1"/>
</dbReference>
<dbReference type="InterPro" id="IPR050078">
    <property type="entry name" value="Ribosomal_L11_MeTrfase_PrmA"/>
</dbReference>
<dbReference type="InterPro" id="IPR004498">
    <property type="entry name" value="Ribosomal_PrmA_MeTrfase"/>
</dbReference>
<dbReference type="InterPro" id="IPR029063">
    <property type="entry name" value="SAM-dependent_MTases_sf"/>
</dbReference>
<dbReference type="NCBIfam" id="TIGR00406">
    <property type="entry name" value="prmA"/>
    <property type="match status" value="1"/>
</dbReference>
<dbReference type="PANTHER" id="PTHR43648">
    <property type="entry name" value="ELECTRON TRANSFER FLAVOPROTEIN BETA SUBUNIT LYSINE METHYLTRANSFERASE"/>
    <property type="match status" value="1"/>
</dbReference>
<dbReference type="PANTHER" id="PTHR43648:SF1">
    <property type="entry name" value="ELECTRON TRANSFER FLAVOPROTEIN BETA SUBUNIT LYSINE METHYLTRANSFERASE"/>
    <property type="match status" value="1"/>
</dbReference>
<dbReference type="Pfam" id="PF06325">
    <property type="entry name" value="PrmA"/>
    <property type="match status" value="1"/>
</dbReference>
<dbReference type="PIRSF" id="PIRSF000401">
    <property type="entry name" value="RPL11_MTase"/>
    <property type="match status" value="1"/>
</dbReference>
<dbReference type="SUPFAM" id="SSF53335">
    <property type="entry name" value="S-adenosyl-L-methionine-dependent methyltransferases"/>
    <property type="match status" value="1"/>
</dbReference>
<proteinExistence type="inferred from homology"/>
<gene>
    <name evidence="1" type="primary">prmA</name>
    <name type="ordered locus">LAR_0690</name>
</gene>
<accession>B2G6X4</accession>
<comment type="function">
    <text evidence="1">Methylates ribosomal protein L11.</text>
</comment>
<comment type="catalytic activity">
    <reaction evidence="1">
        <text>L-lysyl-[protein] + 3 S-adenosyl-L-methionine = N(6),N(6),N(6)-trimethyl-L-lysyl-[protein] + 3 S-adenosyl-L-homocysteine + 3 H(+)</text>
        <dbReference type="Rhea" id="RHEA:54192"/>
        <dbReference type="Rhea" id="RHEA-COMP:9752"/>
        <dbReference type="Rhea" id="RHEA-COMP:13826"/>
        <dbReference type="ChEBI" id="CHEBI:15378"/>
        <dbReference type="ChEBI" id="CHEBI:29969"/>
        <dbReference type="ChEBI" id="CHEBI:57856"/>
        <dbReference type="ChEBI" id="CHEBI:59789"/>
        <dbReference type="ChEBI" id="CHEBI:61961"/>
    </reaction>
</comment>
<comment type="subcellular location">
    <subcellularLocation>
        <location evidence="1">Cytoplasm</location>
    </subcellularLocation>
</comment>
<comment type="similarity">
    <text evidence="1">Belongs to the methyltransferase superfamily. PrmA family.</text>
</comment>
<organism>
    <name type="scientific">Limosilactobacillus reuteri subsp. reuteri (strain JCM 1112)</name>
    <name type="common">Lactobacillus reuteri</name>
    <dbReference type="NCBI Taxonomy" id="557433"/>
    <lineage>
        <taxon>Bacteria</taxon>
        <taxon>Bacillati</taxon>
        <taxon>Bacillota</taxon>
        <taxon>Bacilli</taxon>
        <taxon>Lactobacillales</taxon>
        <taxon>Lactobacillaceae</taxon>
        <taxon>Limosilactobacillus</taxon>
    </lineage>
</organism>
<reference key="1">
    <citation type="journal article" date="2008" name="DNA Res.">
        <title>Comparative genome analysis of Lactobacillus reuteri and Lactobacillus fermentum reveal a genomic island for reuterin and cobalamin production.</title>
        <authorList>
            <person name="Morita H."/>
            <person name="Toh H."/>
            <person name="Fukuda S."/>
            <person name="Horikawa H."/>
            <person name="Oshima K."/>
            <person name="Suzuki T."/>
            <person name="Murakami M."/>
            <person name="Hisamatsu S."/>
            <person name="Kato Y."/>
            <person name="Takizawa T."/>
            <person name="Fukuoka H."/>
            <person name="Yoshimura T."/>
            <person name="Itoh K."/>
            <person name="O'Sullivan D.J."/>
            <person name="McKay L.L."/>
            <person name="Ohno H."/>
            <person name="Kikuchi J."/>
            <person name="Masaoka T."/>
            <person name="Hattori M."/>
        </authorList>
    </citation>
    <scope>NUCLEOTIDE SEQUENCE [LARGE SCALE GENOMIC DNA]</scope>
    <source>
        <strain>JCM 1112</strain>
    </source>
</reference>
<evidence type="ECO:0000255" key="1">
    <source>
        <dbReference type="HAMAP-Rule" id="MF_00735"/>
    </source>
</evidence>
<sequence length="319" mass="34967">MDWTAIKVITSSEAVEAVSYILTDMGAQGVQIEDAADFANLHEGKYGDHGEFIDPSSIPHRKNGAAVSGYFPQNVFVPELLPTIHQRVAKLREYGLNPGENDVSAATVDNQQWATVWQKYYHPLRVTDQLTIVPQWEEYQPADPKEKLIFLDPGMAFGTGTHPTTRLMLEALEKTIVGNEYVIDVGTGSGVLSIAAKHLGAGKVDAYDIDEVAVNSAKKNLALNPVAKDVKVGINSLLDGIHTKADLIVANILAEIIVPLIPQAYENLKPGGKFLVSGIIDDKAPLIRQKLQEQGFIIDDEQQMKDWHGMIAHKPTEVK</sequence>
<feature type="chain" id="PRO_1000192640" description="Ribosomal protein L11 methyltransferase">
    <location>
        <begin position="1"/>
        <end position="319"/>
    </location>
</feature>
<feature type="binding site" evidence="1">
    <location>
        <position position="165"/>
    </location>
    <ligand>
        <name>S-adenosyl-L-methionine</name>
        <dbReference type="ChEBI" id="CHEBI:59789"/>
    </ligand>
</feature>
<feature type="binding site" evidence="1">
    <location>
        <position position="186"/>
    </location>
    <ligand>
        <name>S-adenosyl-L-methionine</name>
        <dbReference type="ChEBI" id="CHEBI:59789"/>
    </ligand>
</feature>
<feature type="binding site" evidence="1">
    <location>
        <position position="208"/>
    </location>
    <ligand>
        <name>S-adenosyl-L-methionine</name>
        <dbReference type="ChEBI" id="CHEBI:59789"/>
    </ligand>
</feature>
<feature type="binding site" evidence="1">
    <location>
        <position position="251"/>
    </location>
    <ligand>
        <name>S-adenosyl-L-methionine</name>
        <dbReference type="ChEBI" id="CHEBI:59789"/>
    </ligand>
</feature>
<protein>
    <recommendedName>
        <fullName evidence="1">Ribosomal protein L11 methyltransferase</fullName>
        <shortName evidence="1">L11 Mtase</shortName>
        <ecNumber evidence="1">2.1.1.-</ecNumber>
    </recommendedName>
</protein>
<name>PRMA_LIMRJ</name>